<dbReference type="EMBL" id="BX548175">
    <property type="protein sequence ID" value="CAE22262.1"/>
    <property type="molecule type" value="Genomic_DNA"/>
</dbReference>
<dbReference type="RefSeq" id="WP_011131452.1">
    <property type="nucleotide sequence ID" value="NC_005071.1"/>
</dbReference>
<dbReference type="SMR" id="Q7V479"/>
<dbReference type="KEGG" id="pmt:PMT_2088"/>
<dbReference type="eggNOG" id="COG0080">
    <property type="taxonomic scope" value="Bacteria"/>
</dbReference>
<dbReference type="HOGENOM" id="CLU_074237_2_1_3"/>
<dbReference type="OrthoDB" id="9802408at2"/>
<dbReference type="Proteomes" id="UP000001423">
    <property type="component" value="Chromosome"/>
</dbReference>
<dbReference type="GO" id="GO:0022625">
    <property type="term" value="C:cytosolic large ribosomal subunit"/>
    <property type="evidence" value="ECO:0007669"/>
    <property type="project" value="TreeGrafter"/>
</dbReference>
<dbReference type="GO" id="GO:0070180">
    <property type="term" value="F:large ribosomal subunit rRNA binding"/>
    <property type="evidence" value="ECO:0007669"/>
    <property type="project" value="UniProtKB-UniRule"/>
</dbReference>
<dbReference type="GO" id="GO:0003735">
    <property type="term" value="F:structural constituent of ribosome"/>
    <property type="evidence" value="ECO:0007669"/>
    <property type="project" value="InterPro"/>
</dbReference>
<dbReference type="GO" id="GO:0006412">
    <property type="term" value="P:translation"/>
    <property type="evidence" value="ECO:0007669"/>
    <property type="project" value="UniProtKB-UniRule"/>
</dbReference>
<dbReference type="CDD" id="cd00349">
    <property type="entry name" value="Ribosomal_L11"/>
    <property type="match status" value="1"/>
</dbReference>
<dbReference type="FunFam" id="1.10.10.250:FF:000001">
    <property type="entry name" value="50S ribosomal protein L11"/>
    <property type="match status" value="1"/>
</dbReference>
<dbReference type="FunFam" id="3.30.1550.10:FF:000001">
    <property type="entry name" value="50S ribosomal protein L11"/>
    <property type="match status" value="1"/>
</dbReference>
<dbReference type="Gene3D" id="1.10.10.250">
    <property type="entry name" value="Ribosomal protein L11, C-terminal domain"/>
    <property type="match status" value="1"/>
</dbReference>
<dbReference type="Gene3D" id="3.30.1550.10">
    <property type="entry name" value="Ribosomal protein L11/L12, N-terminal domain"/>
    <property type="match status" value="1"/>
</dbReference>
<dbReference type="HAMAP" id="MF_00736">
    <property type="entry name" value="Ribosomal_uL11"/>
    <property type="match status" value="1"/>
</dbReference>
<dbReference type="InterPro" id="IPR000911">
    <property type="entry name" value="Ribosomal_uL11"/>
</dbReference>
<dbReference type="InterPro" id="IPR006519">
    <property type="entry name" value="Ribosomal_uL11_bac-typ"/>
</dbReference>
<dbReference type="InterPro" id="IPR020783">
    <property type="entry name" value="Ribosomal_uL11_C"/>
</dbReference>
<dbReference type="InterPro" id="IPR036769">
    <property type="entry name" value="Ribosomal_uL11_C_sf"/>
</dbReference>
<dbReference type="InterPro" id="IPR020785">
    <property type="entry name" value="Ribosomal_uL11_CS"/>
</dbReference>
<dbReference type="InterPro" id="IPR020784">
    <property type="entry name" value="Ribosomal_uL11_N"/>
</dbReference>
<dbReference type="InterPro" id="IPR036796">
    <property type="entry name" value="Ribosomal_uL11_N_sf"/>
</dbReference>
<dbReference type="NCBIfam" id="TIGR01632">
    <property type="entry name" value="L11_bact"/>
    <property type="match status" value="1"/>
</dbReference>
<dbReference type="PANTHER" id="PTHR11661">
    <property type="entry name" value="60S RIBOSOMAL PROTEIN L12"/>
    <property type="match status" value="1"/>
</dbReference>
<dbReference type="PANTHER" id="PTHR11661:SF1">
    <property type="entry name" value="LARGE RIBOSOMAL SUBUNIT PROTEIN UL11M"/>
    <property type="match status" value="1"/>
</dbReference>
<dbReference type="Pfam" id="PF00298">
    <property type="entry name" value="Ribosomal_L11"/>
    <property type="match status" value="1"/>
</dbReference>
<dbReference type="Pfam" id="PF03946">
    <property type="entry name" value="Ribosomal_L11_N"/>
    <property type="match status" value="1"/>
</dbReference>
<dbReference type="SMART" id="SM00649">
    <property type="entry name" value="RL11"/>
    <property type="match status" value="1"/>
</dbReference>
<dbReference type="SUPFAM" id="SSF54747">
    <property type="entry name" value="Ribosomal L11/L12e N-terminal domain"/>
    <property type="match status" value="1"/>
</dbReference>
<dbReference type="SUPFAM" id="SSF46906">
    <property type="entry name" value="Ribosomal protein L11, C-terminal domain"/>
    <property type="match status" value="1"/>
</dbReference>
<dbReference type="PROSITE" id="PS00359">
    <property type="entry name" value="RIBOSOMAL_L11"/>
    <property type="match status" value="1"/>
</dbReference>
<evidence type="ECO:0000255" key="1">
    <source>
        <dbReference type="HAMAP-Rule" id="MF_00736"/>
    </source>
</evidence>
<evidence type="ECO:0000305" key="2"/>
<name>RL11_PROMM</name>
<gene>
    <name evidence="1" type="primary">rplK</name>
    <name evidence="1" type="synonym">rpl11</name>
    <name type="ordered locus">PMT_2088</name>
</gene>
<protein>
    <recommendedName>
        <fullName evidence="1">Large ribosomal subunit protein uL11</fullName>
    </recommendedName>
    <alternativeName>
        <fullName evidence="2">50S ribosomal protein L11</fullName>
    </alternativeName>
</protein>
<accession>Q7V479</accession>
<proteinExistence type="inferred from homology"/>
<comment type="function">
    <text evidence="1">Forms part of the ribosomal stalk which helps the ribosome interact with GTP-bound translation factors.</text>
</comment>
<comment type="subunit">
    <text evidence="1">Part of the ribosomal stalk of the 50S ribosomal subunit. Interacts with L10 and the large rRNA to form the base of the stalk. L10 forms an elongated spine to which L12 dimers bind in a sequential fashion forming a multimeric L10(L12)X complex.</text>
</comment>
<comment type="PTM">
    <text evidence="1">One or more lysine residues are methylated.</text>
</comment>
<comment type="similarity">
    <text evidence="1">Belongs to the universal ribosomal protein uL11 family.</text>
</comment>
<sequence>MAKKVVSVIKLALQAGKANPAPPVGPALGQHGVNIMAFCKEYNARTQDKAGLVIPVEISVFEDRSFTFITKTPPASVLITKAAGIEKGSGESAHGKVGSLSRSQLEEIAKTKLPDLNCTSIESAMRIIEGTARNMGVSISD</sequence>
<organism>
    <name type="scientific">Prochlorococcus marinus (strain MIT 9313)</name>
    <dbReference type="NCBI Taxonomy" id="74547"/>
    <lineage>
        <taxon>Bacteria</taxon>
        <taxon>Bacillati</taxon>
        <taxon>Cyanobacteriota</taxon>
        <taxon>Cyanophyceae</taxon>
        <taxon>Synechococcales</taxon>
        <taxon>Prochlorococcaceae</taxon>
        <taxon>Prochlorococcus</taxon>
    </lineage>
</organism>
<keyword id="KW-0488">Methylation</keyword>
<keyword id="KW-1185">Reference proteome</keyword>
<keyword id="KW-0687">Ribonucleoprotein</keyword>
<keyword id="KW-0689">Ribosomal protein</keyword>
<keyword id="KW-0694">RNA-binding</keyword>
<keyword id="KW-0699">rRNA-binding</keyword>
<feature type="chain" id="PRO_0000104340" description="Large ribosomal subunit protein uL11">
    <location>
        <begin position="1"/>
        <end position="141"/>
    </location>
</feature>
<reference key="1">
    <citation type="journal article" date="2003" name="Nature">
        <title>Genome divergence in two Prochlorococcus ecotypes reflects oceanic niche differentiation.</title>
        <authorList>
            <person name="Rocap G."/>
            <person name="Larimer F.W."/>
            <person name="Lamerdin J.E."/>
            <person name="Malfatti S."/>
            <person name="Chain P."/>
            <person name="Ahlgren N.A."/>
            <person name="Arellano A."/>
            <person name="Coleman M."/>
            <person name="Hauser L."/>
            <person name="Hess W.R."/>
            <person name="Johnson Z.I."/>
            <person name="Land M.L."/>
            <person name="Lindell D."/>
            <person name="Post A.F."/>
            <person name="Regala W."/>
            <person name="Shah M."/>
            <person name="Shaw S.L."/>
            <person name="Steglich C."/>
            <person name="Sullivan M.B."/>
            <person name="Ting C.S."/>
            <person name="Tolonen A."/>
            <person name="Webb E.A."/>
            <person name="Zinser E.R."/>
            <person name="Chisholm S.W."/>
        </authorList>
    </citation>
    <scope>NUCLEOTIDE SEQUENCE [LARGE SCALE GENOMIC DNA]</scope>
    <source>
        <strain>MIT 9313</strain>
    </source>
</reference>